<comment type="catalytic activity">
    <reaction evidence="1">
        <text>beta-D-fructose 1,6-bisphosphate + H2O = beta-D-fructose 6-phosphate + phosphate</text>
        <dbReference type="Rhea" id="RHEA:11064"/>
        <dbReference type="ChEBI" id="CHEBI:15377"/>
        <dbReference type="ChEBI" id="CHEBI:32966"/>
        <dbReference type="ChEBI" id="CHEBI:43474"/>
        <dbReference type="ChEBI" id="CHEBI:57634"/>
        <dbReference type="EC" id="3.1.3.11"/>
    </reaction>
</comment>
<comment type="cofactor">
    <cofactor evidence="1">
        <name>Mg(2+)</name>
        <dbReference type="ChEBI" id="CHEBI:18420"/>
    </cofactor>
    <text evidence="1">Binds 2 magnesium ions per subunit.</text>
</comment>
<comment type="pathway">
    <text evidence="1">Carbohydrate biosynthesis; gluconeogenesis.</text>
</comment>
<comment type="subunit">
    <text evidence="1">Homotetramer.</text>
</comment>
<comment type="subcellular location">
    <subcellularLocation>
        <location evidence="1">Cytoplasm</location>
    </subcellularLocation>
</comment>
<comment type="similarity">
    <text evidence="1">Belongs to the FBPase class 1 family.</text>
</comment>
<accession>Q0AGV1</accession>
<organism>
    <name type="scientific">Nitrosomonas eutropha (strain DSM 101675 / C91 / Nm57)</name>
    <dbReference type="NCBI Taxonomy" id="335283"/>
    <lineage>
        <taxon>Bacteria</taxon>
        <taxon>Pseudomonadati</taxon>
        <taxon>Pseudomonadota</taxon>
        <taxon>Betaproteobacteria</taxon>
        <taxon>Nitrosomonadales</taxon>
        <taxon>Nitrosomonadaceae</taxon>
        <taxon>Nitrosomonas</taxon>
    </lineage>
</organism>
<proteinExistence type="inferred from homology"/>
<gene>
    <name evidence="1" type="primary">fbp</name>
    <name type="ordered locus">Neut_1176</name>
</gene>
<keyword id="KW-0119">Carbohydrate metabolism</keyword>
<keyword id="KW-0963">Cytoplasm</keyword>
<keyword id="KW-0378">Hydrolase</keyword>
<keyword id="KW-0460">Magnesium</keyword>
<keyword id="KW-0479">Metal-binding</keyword>
<sequence>MHTGTTLTQFIIEDQRHIAGASGDFTALLNDIVTAIKTISNAVNKGALIGVMGALDTENVQGETQKKLDVITNEIMIRHNEWAGHLAGMASEEMDDVYLIPNRYPLGKYLLVFDPLDGSSNVDINISVGTIFSILRAPVPGQAASMEDFLQPGTKQVCAGYALYGSSTMLVLTTGHGVNGFTLDRDIGEFVLTHPGMKIPADTREFAINASNQRFWEEPVQRYVSECLAGSTGPRNRDFNMRWVASMVAEVHRILTRGGIFMYPRDTKDPSKPGRLRLMYEASPMSFIVEQAGGLSTTGYERILDISPENLHQRVPVILGSKNEVEVVLGYHKA</sequence>
<feature type="chain" id="PRO_0000364617" description="Fructose-1,6-bisphosphatase class 1">
    <location>
        <begin position="1"/>
        <end position="334"/>
    </location>
</feature>
<feature type="binding site" evidence="1">
    <location>
        <position position="92"/>
    </location>
    <ligand>
        <name>Mg(2+)</name>
        <dbReference type="ChEBI" id="CHEBI:18420"/>
        <label>1</label>
    </ligand>
</feature>
<feature type="binding site" evidence="1">
    <location>
        <position position="114"/>
    </location>
    <ligand>
        <name>Mg(2+)</name>
        <dbReference type="ChEBI" id="CHEBI:18420"/>
        <label>1</label>
    </ligand>
</feature>
<feature type="binding site" evidence="1">
    <location>
        <position position="114"/>
    </location>
    <ligand>
        <name>Mg(2+)</name>
        <dbReference type="ChEBI" id="CHEBI:18420"/>
        <label>2</label>
    </ligand>
</feature>
<feature type="binding site" evidence="1">
    <location>
        <position position="116"/>
    </location>
    <ligand>
        <name>Mg(2+)</name>
        <dbReference type="ChEBI" id="CHEBI:18420"/>
        <label>1</label>
    </ligand>
</feature>
<feature type="binding site" evidence="1">
    <location>
        <begin position="117"/>
        <end position="120"/>
    </location>
    <ligand>
        <name>substrate</name>
    </ligand>
</feature>
<feature type="binding site" evidence="1">
    <location>
        <position position="117"/>
    </location>
    <ligand>
        <name>Mg(2+)</name>
        <dbReference type="ChEBI" id="CHEBI:18420"/>
        <label>2</label>
    </ligand>
</feature>
<feature type="binding site" evidence="1">
    <location>
        <position position="209"/>
    </location>
    <ligand>
        <name>substrate</name>
    </ligand>
</feature>
<feature type="binding site" evidence="1">
    <location>
        <position position="281"/>
    </location>
    <ligand>
        <name>Mg(2+)</name>
        <dbReference type="ChEBI" id="CHEBI:18420"/>
        <label>2</label>
    </ligand>
</feature>
<name>F16PA_NITEC</name>
<dbReference type="EC" id="3.1.3.11" evidence="1"/>
<dbReference type="EMBL" id="CP000450">
    <property type="protein sequence ID" value="ABI59431.1"/>
    <property type="molecule type" value="Genomic_DNA"/>
</dbReference>
<dbReference type="RefSeq" id="WP_011634251.1">
    <property type="nucleotide sequence ID" value="NC_008344.1"/>
</dbReference>
<dbReference type="SMR" id="Q0AGV1"/>
<dbReference type="STRING" id="335283.Neut_1176"/>
<dbReference type="KEGG" id="net:Neut_1176"/>
<dbReference type="eggNOG" id="COG0158">
    <property type="taxonomic scope" value="Bacteria"/>
</dbReference>
<dbReference type="HOGENOM" id="CLU_039977_0_0_4"/>
<dbReference type="OrthoDB" id="9806756at2"/>
<dbReference type="UniPathway" id="UPA00138"/>
<dbReference type="Proteomes" id="UP000001966">
    <property type="component" value="Chromosome"/>
</dbReference>
<dbReference type="GO" id="GO:0005829">
    <property type="term" value="C:cytosol"/>
    <property type="evidence" value="ECO:0007669"/>
    <property type="project" value="TreeGrafter"/>
</dbReference>
<dbReference type="GO" id="GO:0042132">
    <property type="term" value="F:fructose 1,6-bisphosphate 1-phosphatase activity"/>
    <property type="evidence" value="ECO:0007669"/>
    <property type="project" value="UniProtKB-UniRule"/>
</dbReference>
<dbReference type="GO" id="GO:0000287">
    <property type="term" value="F:magnesium ion binding"/>
    <property type="evidence" value="ECO:0007669"/>
    <property type="project" value="UniProtKB-UniRule"/>
</dbReference>
<dbReference type="GO" id="GO:0030388">
    <property type="term" value="P:fructose 1,6-bisphosphate metabolic process"/>
    <property type="evidence" value="ECO:0007669"/>
    <property type="project" value="TreeGrafter"/>
</dbReference>
<dbReference type="GO" id="GO:0006002">
    <property type="term" value="P:fructose 6-phosphate metabolic process"/>
    <property type="evidence" value="ECO:0007669"/>
    <property type="project" value="TreeGrafter"/>
</dbReference>
<dbReference type="GO" id="GO:0006000">
    <property type="term" value="P:fructose metabolic process"/>
    <property type="evidence" value="ECO:0007669"/>
    <property type="project" value="TreeGrafter"/>
</dbReference>
<dbReference type="GO" id="GO:0006094">
    <property type="term" value="P:gluconeogenesis"/>
    <property type="evidence" value="ECO:0007669"/>
    <property type="project" value="UniProtKB-UniRule"/>
</dbReference>
<dbReference type="GO" id="GO:0005986">
    <property type="term" value="P:sucrose biosynthetic process"/>
    <property type="evidence" value="ECO:0007669"/>
    <property type="project" value="TreeGrafter"/>
</dbReference>
<dbReference type="CDD" id="cd00354">
    <property type="entry name" value="FBPase"/>
    <property type="match status" value="1"/>
</dbReference>
<dbReference type="FunFam" id="3.30.540.10:FF:000006">
    <property type="entry name" value="Fructose-1,6-bisphosphatase class 1"/>
    <property type="match status" value="1"/>
</dbReference>
<dbReference type="FunFam" id="3.40.190.80:FF:000011">
    <property type="entry name" value="Fructose-1,6-bisphosphatase class 1"/>
    <property type="match status" value="1"/>
</dbReference>
<dbReference type="Gene3D" id="3.40.190.80">
    <property type="match status" value="1"/>
</dbReference>
<dbReference type="Gene3D" id="3.30.540.10">
    <property type="entry name" value="Fructose-1,6-Bisphosphatase, subunit A, domain 1"/>
    <property type="match status" value="1"/>
</dbReference>
<dbReference type="HAMAP" id="MF_01855">
    <property type="entry name" value="FBPase_class1"/>
    <property type="match status" value="1"/>
</dbReference>
<dbReference type="InterPro" id="IPR044015">
    <property type="entry name" value="FBPase_C_dom"/>
</dbReference>
<dbReference type="InterPro" id="IPR000146">
    <property type="entry name" value="FBPase_class-1"/>
</dbReference>
<dbReference type="InterPro" id="IPR033391">
    <property type="entry name" value="FBPase_N"/>
</dbReference>
<dbReference type="InterPro" id="IPR028343">
    <property type="entry name" value="FBPtase"/>
</dbReference>
<dbReference type="NCBIfam" id="NF006778">
    <property type="entry name" value="PRK09293.1-1"/>
    <property type="match status" value="1"/>
</dbReference>
<dbReference type="NCBIfam" id="NF006779">
    <property type="entry name" value="PRK09293.1-3"/>
    <property type="match status" value="1"/>
</dbReference>
<dbReference type="NCBIfam" id="NF006780">
    <property type="entry name" value="PRK09293.1-4"/>
    <property type="match status" value="1"/>
</dbReference>
<dbReference type="PANTHER" id="PTHR11556">
    <property type="entry name" value="FRUCTOSE-1,6-BISPHOSPHATASE-RELATED"/>
    <property type="match status" value="1"/>
</dbReference>
<dbReference type="PANTHER" id="PTHR11556:SF35">
    <property type="entry name" value="SEDOHEPTULOSE-1,7-BISPHOSPHATASE, CHLOROPLASTIC"/>
    <property type="match status" value="1"/>
</dbReference>
<dbReference type="Pfam" id="PF00316">
    <property type="entry name" value="FBPase"/>
    <property type="match status" value="1"/>
</dbReference>
<dbReference type="Pfam" id="PF18913">
    <property type="entry name" value="FBPase_C"/>
    <property type="match status" value="1"/>
</dbReference>
<dbReference type="PIRSF" id="PIRSF500210">
    <property type="entry name" value="FBPtase"/>
    <property type="match status" value="1"/>
</dbReference>
<dbReference type="PIRSF" id="PIRSF000904">
    <property type="entry name" value="FBPtase_SBPase"/>
    <property type="match status" value="1"/>
</dbReference>
<dbReference type="PRINTS" id="PR00115">
    <property type="entry name" value="F16BPHPHTASE"/>
</dbReference>
<dbReference type="SUPFAM" id="SSF56655">
    <property type="entry name" value="Carbohydrate phosphatase"/>
    <property type="match status" value="1"/>
</dbReference>
<reference key="1">
    <citation type="journal article" date="2007" name="Environ. Microbiol.">
        <title>Whole-genome analysis of the ammonia-oxidizing bacterium, Nitrosomonas eutropha C91: implications for niche adaptation.</title>
        <authorList>
            <person name="Stein L.Y."/>
            <person name="Arp D.J."/>
            <person name="Berube P.M."/>
            <person name="Chain P.S."/>
            <person name="Hauser L."/>
            <person name="Jetten M.S."/>
            <person name="Klotz M.G."/>
            <person name="Larimer F.W."/>
            <person name="Norton J.M."/>
            <person name="Op den Camp H.J.M."/>
            <person name="Shin M."/>
            <person name="Wei X."/>
        </authorList>
    </citation>
    <scope>NUCLEOTIDE SEQUENCE [LARGE SCALE GENOMIC DNA]</scope>
    <source>
        <strain>DSM 101675 / C91 / Nm57</strain>
    </source>
</reference>
<protein>
    <recommendedName>
        <fullName evidence="1">Fructose-1,6-bisphosphatase class 1</fullName>
        <shortName evidence="1">FBPase class 1</shortName>
        <ecNumber evidence="1">3.1.3.11</ecNumber>
    </recommendedName>
    <alternativeName>
        <fullName evidence="1">D-fructose-1,6-bisphosphate 1-phosphohydrolase class 1</fullName>
    </alternativeName>
</protein>
<evidence type="ECO:0000255" key="1">
    <source>
        <dbReference type="HAMAP-Rule" id="MF_01855"/>
    </source>
</evidence>